<proteinExistence type="inferred from homology"/>
<accession>B5YYA0</accession>
<organism>
    <name type="scientific">Escherichia coli O157:H7 (strain EC4115 / EHEC)</name>
    <dbReference type="NCBI Taxonomy" id="444450"/>
    <lineage>
        <taxon>Bacteria</taxon>
        <taxon>Pseudomonadati</taxon>
        <taxon>Pseudomonadota</taxon>
        <taxon>Gammaproteobacteria</taxon>
        <taxon>Enterobacterales</taxon>
        <taxon>Enterobacteriaceae</taxon>
        <taxon>Escherichia</taxon>
    </lineage>
</organism>
<gene>
    <name evidence="1" type="primary">yaaA</name>
    <name type="ordered locus">ECH74115_0007</name>
</gene>
<protein>
    <recommendedName>
        <fullName evidence="1">UPF0246 protein YaaA</fullName>
    </recommendedName>
</protein>
<dbReference type="EMBL" id="CP001164">
    <property type="protein sequence ID" value="ACI39657.1"/>
    <property type="molecule type" value="Genomic_DNA"/>
</dbReference>
<dbReference type="RefSeq" id="WP_000906208.1">
    <property type="nucleotide sequence ID" value="NC_011353.1"/>
</dbReference>
<dbReference type="SMR" id="B5YYA0"/>
<dbReference type="KEGG" id="ecf:ECH74115_0007"/>
<dbReference type="HOGENOM" id="CLU_061989_0_0_6"/>
<dbReference type="GO" id="GO:0005829">
    <property type="term" value="C:cytosol"/>
    <property type="evidence" value="ECO:0007669"/>
    <property type="project" value="TreeGrafter"/>
</dbReference>
<dbReference type="GO" id="GO:0033194">
    <property type="term" value="P:response to hydroperoxide"/>
    <property type="evidence" value="ECO:0007669"/>
    <property type="project" value="TreeGrafter"/>
</dbReference>
<dbReference type="HAMAP" id="MF_00652">
    <property type="entry name" value="UPF0246"/>
    <property type="match status" value="1"/>
</dbReference>
<dbReference type="InterPro" id="IPR005583">
    <property type="entry name" value="YaaA"/>
</dbReference>
<dbReference type="NCBIfam" id="NF002541">
    <property type="entry name" value="PRK02101.1-1"/>
    <property type="match status" value="1"/>
</dbReference>
<dbReference type="NCBIfam" id="NF002542">
    <property type="entry name" value="PRK02101.1-3"/>
    <property type="match status" value="1"/>
</dbReference>
<dbReference type="PANTHER" id="PTHR30283:SF4">
    <property type="entry name" value="PEROXIDE STRESS RESISTANCE PROTEIN YAAA"/>
    <property type="match status" value="1"/>
</dbReference>
<dbReference type="PANTHER" id="PTHR30283">
    <property type="entry name" value="PEROXIDE STRESS RESPONSE PROTEIN YAAA"/>
    <property type="match status" value="1"/>
</dbReference>
<dbReference type="Pfam" id="PF03883">
    <property type="entry name" value="H2O2_YaaD"/>
    <property type="match status" value="1"/>
</dbReference>
<name>YAAA_ECO5E</name>
<reference key="1">
    <citation type="journal article" date="2011" name="Proc. Natl. Acad. Sci. U.S.A.">
        <title>Genomic anatomy of Escherichia coli O157:H7 outbreaks.</title>
        <authorList>
            <person name="Eppinger M."/>
            <person name="Mammel M.K."/>
            <person name="Leclerc J.E."/>
            <person name="Ravel J."/>
            <person name="Cebula T.A."/>
        </authorList>
    </citation>
    <scope>NUCLEOTIDE SEQUENCE [LARGE SCALE GENOMIC DNA]</scope>
    <source>
        <strain>EC4115 / EHEC</strain>
    </source>
</reference>
<feature type="chain" id="PRO_1000131112" description="UPF0246 protein YaaA">
    <location>
        <begin position="1"/>
        <end position="258"/>
    </location>
</feature>
<comment type="similarity">
    <text evidence="1">Belongs to the UPF0246 family.</text>
</comment>
<sequence>MLILISPAKTLDYQSPLTTTRYTLPELLDNSQQLIHEARKLTPPQISTLMRISDKLAGINAARFHDWQPDFTPENARQAILAFKGDVYTGLQAETFSEDDFDFAQQHLRMLSGLYGVLRPLDLMQPYRLEMGIRLENTRGKDLYQFWGDIITNKLNEALAAQGDNVVINLASDEYFKSVKPKKLNAEIIKPVFLDEKNGKFKIISFYAKKARGLMSRFIIENRLTKPEQLTGFNSEGYFFDEASSSNGELVFKRYEQR</sequence>
<evidence type="ECO:0000255" key="1">
    <source>
        <dbReference type="HAMAP-Rule" id="MF_00652"/>
    </source>
</evidence>